<feature type="chain" id="PRO_0000179806" description="Putative N-acetylmannosamine-6-phosphate 2-epimerase 2">
    <location>
        <begin position="1"/>
        <end position="232"/>
    </location>
</feature>
<comment type="function">
    <text evidence="1">Converts N-acetylmannosamine-6-phosphate (ManNAc-6-P) to N-acetylglucosamine-6-phosphate (GlcNAc-6-P).</text>
</comment>
<comment type="catalytic activity">
    <reaction>
        <text>an N-acyl-D-glucosamine 6-phosphate = an N-acyl-D-mannosamine 6-phosphate</text>
        <dbReference type="Rhea" id="RHEA:23932"/>
        <dbReference type="ChEBI" id="CHEBI:57599"/>
        <dbReference type="ChEBI" id="CHEBI:57666"/>
        <dbReference type="EC" id="5.1.3.9"/>
    </reaction>
</comment>
<comment type="pathway">
    <text>Amino-sugar metabolism; N-acetylneuraminate degradation; D-fructose 6-phosphate from N-acetylneuraminate: step 3/5.</text>
</comment>
<comment type="similarity">
    <text evidence="1">Belongs to the NanE family.</text>
</comment>
<organism>
    <name type="scientific">Streptococcus pneumoniae serotype 4 (strain ATCC BAA-334 / TIGR4)</name>
    <dbReference type="NCBI Taxonomy" id="170187"/>
    <lineage>
        <taxon>Bacteria</taxon>
        <taxon>Bacillati</taxon>
        <taxon>Bacillota</taxon>
        <taxon>Bacilli</taxon>
        <taxon>Lactobacillales</taxon>
        <taxon>Streptococcaceae</taxon>
        <taxon>Streptococcus</taxon>
    </lineage>
</organism>
<proteinExistence type="inferred from homology"/>
<sequence length="232" mass="25450">MPQISKEALIEQIKDGIIVSCQALPHEPLYTEAGGVIPLLVKAAEQGGAVGIRANSVRDIKEIKEVTKLPIIGIIKRDYPPQEPFITATMKEVDELAELDIEVIALDCTKRERYDGLEIQEFIRQVKEKYPNQLLMADTSIFEEGLAAVEAGIDFVGTTLSGYTSYSPKVDGPDFELIKKLCDAGVDVIAEGKIHTPEQAKQILEYGVRGIVVGGAITRPKEITERFVASLK</sequence>
<accession>P65520</accession>
<accession>Q8DNU6</accession>
<accession>Q97PE4</accession>
<evidence type="ECO:0000305" key="1"/>
<reference key="1">
    <citation type="journal article" date="2001" name="Science">
        <title>Complete genome sequence of a virulent isolate of Streptococcus pneumoniae.</title>
        <authorList>
            <person name="Tettelin H."/>
            <person name="Nelson K.E."/>
            <person name="Paulsen I.T."/>
            <person name="Eisen J.A."/>
            <person name="Read T.D."/>
            <person name="Peterson S.N."/>
            <person name="Heidelberg J.F."/>
            <person name="DeBoy R.T."/>
            <person name="Haft D.H."/>
            <person name="Dodson R.J."/>
            <person name="Durkin A.S."/>
            <person name="Gwinn M.L."/>
            <person name="Kolonay J.F."/>
            <person name="Nelson W.C."/>
            <person name="Peterson J.D."/>
            <person name="Umayam L.A."/>
            <person name="White O."/>
            <person name="Salzberg S.L."/>
            <person name="Lewis M.R."/>
            <person name="Radune D."/>
            <person name="Holtzapple E.K."/>
            <person name="Khouri H.M."/>
            <person name="Wolf A.M."/>
            <person name="Utterback T.R."/>
            <person name="Hansen C.L."/>
            <person name="McDonald L.A."/>
            <person name="Feldblyum T.V."/>
            <person name="Angiuoli S.V."/>
            <person name="Dickinson T."/>
            <person name="Hickey E.K."/>
            <person name="Holt I.E."/>
            <person name="Loftus B.J."/>
            <person name="Yang F."/>
            <person name="Smith H.O."/>
            <person name="Venter J.C."/>
            <person name="Dougherty B.A."/>
            <person name="Morrison D.A."/>
            <person name="Hollingshead S.K."/>
            <person name="Fraser C.M."/>
        </authorList>
    </citation>
    <scope>NUCLEOTIDE SEQUENCE [LARGE SCALE GENOMIC DNA]</scope>
    <source>
        <strain>ATCC BAA-334 / TIGR4</strain>
    </source>
</reference>
<protein>
    <recommendedName>
        <fullName>Putative N-acetylmannosamine-6-phosphate 2-epimerase 2</fullName>
        <ecNumber>5.1.3.9</ecNumber>
    </recommendedName>
    <alternativeName>
        <fullName>ManNAc-6-P epimerase 2</fullName>
    </alternativeName>
</protein>
<dbReference type="EC" id="5.1.3.9"/>
<dbReference type="EMBL" id="AE005672">
    <property type="protein sequence ID" value="AAK75764.1"/>
    <property type="molecule type" value="Genomic_DNA"/>
</dbReference>
<dbReference type="PIR" id="C95196">
    <property type="entry name" value="C95196"/>
</dbReference>
<dbReference type="RefSeq" id="WP_001135651.1">
    <property type="nucleotide sequence ID" value="NZ_CP155539.1"/>
</dbReference>
<dbReference type="SMR" id="P65520"/>
<dbReference type="PaxDb" id="170187-SP_1685"/>
<dbReference type="EnsemblBacteria" id="AAK75764">
    <property type="protein sequence ID" value="AAK75764"/>
    <property type="gene ID" value="SP_1685"/>
</dbReference>
<dbReference type="KEGG" id="spn:SP_1685"/>
<dbReference type="eggNOG" id="COG3010">
    <property type="taxonomic scope" value="Bacteria"/>
</dbReference>
<dbReference type="PhylomeDB" id="P65520"/>
<dbReference type="BioCyc" id="SPNE170187:G1FZB-1706-MONOMER"/>
<dbReference type="UniPathway" id="UPA00629">
    <property type="reaction ID" value="UER00682"/>
</dbReference>
<dbReference type="Proteomes" id="UP000000585">
    <property type="component" value="Chromosome"/>
</dbReference>
<dbReference type="GO" id="GO:0005829">
    <property type="term" value="C:cytosol"/>
    <property type="evidence" value="ECO:0007669"/>
    <property type="project" value="TreeGrafter"/>
</dbReference>
<dbReference type="GO" id="GO:0047465">
    <property type="term" value="F:N-acylglucosamine-6-phosphate 2-epimerase activity"/>
    <property type="evidence" value="ECO:0007669"/>
    <property type="project" value="UniProtKB-EC"/>
</dbReference>
<dbReference type="GO" id="GO:0005975">
    <property type="term" value="P:carbohydrate metabolic process"/>
    <property type="evidence" value="ECO:0007669"/>
    <property type="project" value="UniProtKB-UniRule"/>
</dbReference>
<dbReference type="GO" id="GO:0006053">
    <property type="term" value="P:N-acetylmannosamine catabolic process"/>
    <property type="evidence" value="ECO:0007669"/>
    <property type="project" value="TreeGrafter"/>
</dbReference>
<dbReference type="GO" id="GO:0019262">
    <property type="term" value="P:N-acetylneuraminate catabolic process"/>
    <property type="evidence" value="ECO:0007669"/>
    <property type="project" value="UniProtKB-UniRule"/>
</dbReference>
<dbReference type="CDD" id="cd04729">
    <property type="entry name" value="NanE"/>
    <property type="match status" value="1"/>
</dbReference>
<dbReference type="FunFam" id="3.20.20.70:FF:000035">
    <property type="entry name" value="Putative N-acetylmannosamine-6-phosphate 2-epimerase"/>
    <property type="match status" value="1"/>
</dbReference>
<dbReference type="Gene3D" id="3.20.20.70">
    <property type="entry name" value="Aldolase class I"/>
    <property type="match status" value="1"/>
</dbReference>
<dbReference type="HAMAP" id="MF_01235">
    <property type="entry name" value="ManNAc6P_epimer"/>
    <property type="match status" value="1"/>
</dbReference>
<dbReference type="InterPro" id="IPR013785">
    <property type="entry name" value="Aldolase_TIM"/>
</dbReference>
<dbReference type="InterPro" id="IPR007260">
    <property type="entry name" value="NanE"/>
</dbReference>
<dbReference type="InterPro" id="IPR011060">
    <property type="entry name" value="RibuloseP-bd_barrel"/>
</dbReference>
<dbReference type="NCBIfam" id="NF002231">
    <property type="entry name" value="PRK01130.1"/>
    <property type="match status" value="1"/>
</dbReference>
<dbReference type="PANTHER" id="PTHR36204">
    <property type="entry name" value="N-ACETYLMANNOSAMINE-6-PHOSPHATE 2-EPIMERASE-RELATED"/>
    <property type="match status" value="1"/>
</dbReference>
<dbReference type="PANTHER" id="PTHR36204:SF1">
    <property type="entry name" value="N-ACETYLMANNOSAMINE-6-PHOSPHATE 2-EPIMERASE-RELATED"/>
    <property type="match status" value="1"/>
</dbReference>
<dbReference type="Pfam" id="PF04131">
    <property type="entry name" value="NanE"/>
    <property type="match status" value="1"/>
</dbReference>
<dbReference type="SUPFAM" id="SSF51366">
    <property type="entry name" value="Ribulose-phoshate binding barrel"/>
    <property type="match status" value="1"/>
</dbReference>
<name>NANE2_STRPN</name>
<gene>
    <name type="primary">nanE2</name>
    <name type="ordered locus">SP_1685</name>
</gene>
<keyword id="KW-0119">Carbohydrate metabolism</keyword>
<keyword id="KW-0413">Isomerase</keyword>
<keyword id="KW-1185">Reference proteome</keyword>